<name>STL1_ARATH</name>
<gene>
    <name evidence="5" type="primary">STL1</name>
    <name evidence="8" type="ordered locus">At2g41770</name>
    <name evidence="9" type="ORF">T11A7.13</name>
</gene>
<proteinExistence type="evidence at protein level"/>
<protein>
    <recommendedName>
        <fullName evidence="5">Probable glycosyltransferase STELLO1</fullName>
        <ecNumber evidence="6">2.4.-.-</ecNumber>
    </recommendedName>
</protein>
<keyword id="KW-0325">Glycoprotein</keyword>
<keyword id="KW-0328">Glycosyltransferase</keyword>
<keyword id="KW-0333">Golgi apparatus</keyword>
<keyword id="KW-0472">Membrane</keyword>
<keyword id="KW-1185">Reference proteome</keyword>
<keyword id="KW-0735">Signal-anchor</keyword>
<keyword id="KW-0808">Transferase</keyword>
<keyword id="KW-0812">Transmembrane</keyword>
<keyword id="KW-1133">Transmembrane helix</keyword>
<comment type="function">
    <text evidence="4">Probable glycosyltransferase regulating the assembly and trafficking of cellulose synthase complexes.</text>
</comment>
<comment type="subunit">
    <text evidence="4">Homo- and heterodimer with STL2 (PubMed:27277162). Interacts with CESA1, CESA3, CESA4, CESA6, CESA7 and CESA8, but not with GOT1 (PubMed:27277162).</text>
</comment>
<comment type="subcellular location">
    <subcellularLocation>
        <location evidence="4">Golgi apparatus membrane</location>
        <topology evidence="1">Single-pass type II membrane protein</topology>
    </subcellularLocation>
</comment>
<comment type="tissue specificity">
    <text evidence="4">Expressed in cells that are expanding or producing secondary cell walls.</text>
</comment>
<comment type="disruption phenotype">
    <text evidence="4">No visible phenotype, due to the redundancy with STL2. Stl1 and stl2 double mutants are impaired in cellulose production and exhibit a stunted growth.</text>
</comment>
<comment type="miscellaneous">
    <text evidence="7">In classical Greek, STELLO mean 'to set in order, arrange, send'.</text>
</comment>
<comment type="similarity">
    <text evidence="6">Belongs to the STELLO family.</text>
</comment>
<evidence type="ECO:0000255" key="1"/>
<evidence type="ECO:0000255" key="2">
    <source>
        <dbReference type="PROSITE-ProRule" id="PRU00498"/>
    </source>
</evidence>
<evidence type="ECO:0000256" key="3">
    <source>
        <dbReference type="SAM" id="MobiDB-lite"/>
    </source>
</evidence>
<evidence type="ECO:0000269" key="4">
    <source>
    </source>
</evidence>
<evidence type="ECO:0000303" key="5">
    <source>
    </source>
</evidence>
<evidence type="ECO:0000305" key="6"/>
<evidence type="ECO:0000305" key="7">
    <source>
    </source>
</evidence>
<evidence type="ECO:0000312" key="8">
    <source>
        <dbReference type="Araport" id="AT2G41770"/>
    </source>
</evidence>
<evidence type="ECO:0000312" key="9">
    <source>
        <dbReference type="EMBL" id="AAC02770.1"/>
    </source>
</evidence>
<organism>
    <name type="scientific">Arabidopsis thaliana</name>
    <name type="common">Mouse-ear cress</name>
    <dbReference type="NCBI Taxonomy" id="3702"/>
    <lineage>
        <taxon>Eukaryota</taxon>
        <taxon>Viridiplantae</taxon>
        <taxon>Streptophyta</taxon>
        <taxon>Embryophyta</taxon>
        <taxon>Tracheophyta</taxon>
        <taxon>Spermatophyta</taxon>
        <taxon>Magnoliopsida</taxon>
        <taxon>eudicotyledons</taxon>
        <taxon>Gunneridae</taxon>
        <taxon>Pentapetalae</taxon>
        <taxon>rosids</taxon>
        <taxon>malvids</taxon>
        <taxon>Brassicales</taxon>
        <taxon>Brassicaceae</taxon>
        <taxon>Camelineae</taxon>
        <taxon>Arabidopsis</taxon>
    </lineage>
</organism>
<reference key="1">
    <citation type="journal article" date="1999" name="Nature">
        <title>Sequence and analysis of chromosome 2 of the plant Arabidopsis thaliana.</title>
        <authorList>
            <person name="Lin X."/>
            <person name="Kaul S."/>
            <person name="Rounsley S.D."/>
            <person name="Shea T.P."/>
            <person name="Benito M.-I."/>
            <person name="Town C.D."/>
            <person name="Fujii C.Y."/>
            <person name="Mason T.M."/>
            <person name="Bowman C.L."/>
            <person name="Barnstead M.E."/>
            <person name="Feldblyum T.V."/>
            <person name="Buell C.R."/>
            <person name="Ketchum K.A."/>
            <person name="Lee J.J."/>
            <person name="Ronning C.M."/>
            <person name="Koo H.L."/>
            <person name="Moffat K.S."/>
            <person name="Cronin L.A."/>
            <person name="Shen M."/>
            <person name="Pai G."/>
            <person name="Van Aken S."/>
            <person name="Umayam L."/>
            <person name="Tallon L.J."/>
            <person name="Gill J.E."/>
            <person name="Adams M.D."/>
            <person name="Carrera A.J."/>
            <person name="Creasy T.H."/>
            <person name="Goodman H.M."/>
            <person name="Somerville C.R."/>
            <person name="Copenhaver G.P."/>
            <person name="Preuss D."/>
            <person name="Nierman W.C."/>
            <person name="White O."/>
            <person name="Eisen J.A."/>
            <person name="Salzberg S.L."/>
            <person name="Fraser C.M."/>
            <person name="Venter J.C."/>
        </authorList>
    </citation>
    <scope>NUCLEOTIDE SEQUENCE [LARGE SCALE GENOMIC DNA]</scope>
    <source>
        <strain>cv. Columbia</strain>
    </source>
</reference>
<reference key="2">
    <citation type="journal article" date="2017" name="Plant J.">
        <title>Araport11: a complete reannotation of the Arabidopsis thaliana reference genome.</title>
        <authorList>
            <person name="Cheng C.Y."/>
            <person name="Krishnakumar V."/>
            <person name="Chan A.P."/>
            <person name="Thibaud-Nissen F."/>
            <person name="Schobel S."/>
            <person name="Town C.D."/>
        </authorList>
    </citation>
    <scope>GENOME REANNOTATION</scope>
    <source>
        <strain>cv. Columbia</strain>
    </source>
</reference>
<reference key="3">
    <citation type="journal article" date="2003" name="Science">
        <title>Empirical analysis of transcriptional activity in the Arabidopsis genome.</title>
        <authorList>
            <person name="Yamada K."/>
            <person name="Lim J."/>
            <person name="Dale J.M."/>
            <person name="Chen H."/>
            <person name="Shinn P."/>
            <person name="Palm C.J."/>
            <person name="Southwick A.M."/>
            <person name="Wu H.C."/>
            <person name="Kim C.J."/>
            <person name="Nguyen M."/>
            <person name="Pham P.K."/>
            <person name="Cheuk R.F."/>
            <person name="Karlin-Newmann G."/>
            <person name="Liu S.X."/>
            <person name="Lam B."/>
            <person name="Sakano H."/>
            <person name="Wu T."/>
            <person name="Yu G."/>
            <person name="Miranda M."/>
            <person name="Quach H.L."/>
            <person name="Tripp M."/>
            <person name="Chang C.H."/>
            <person name="Lee J.M."/>
            <person name="Toriumi M.J."/>
            <person name="Chan M.M."/>
            <person name="Tang C.C."/>
            <person name="Onodera C.S."/>
            <person name="Deng J.M."/>
            <person name="Akiyama K."/>
            <person name="Ansari Y."/>
            <person name="Arakawa T."/>
            <person name="Banh J."/>
            <person name="Banno F."/>
            <person name="Bowser L."/>
            <person name="Brooks S.Y."/>
            <person name="Carninci P."/>
            <person name="Chao Q."/>
            <person name="Choy N."/>
            <person name="Enju A."/>
            <person name="Goldsmith A.D."/>
            <person name="Gurjal M."/>
            <person name="Hansen N.F."/>
            <person name="Hayashizaki Y."/>
            <person name="Johnson-Hopson C."/>
            <person name="Hsuan V.W."/>
            <person name="Iida K."/>
            <person name="Karnes M."/>
            <person name="Khan S."/>
            <person name="Koesema E."/>
            <person name="Ishida J."/>
            <person name="Jiang P.X."/>
            <person name="Jones T."/>
            <person name="Kawai J."/>
            <person name="Kamiya A."/>
            <person name="Meyers C."/>
            <person name="Nakajima M."/>
            <person name="Narusaka M."/>
            <person name="Seki M."/>
            <person name="Sakurai T."/>
            <person name="Satou M."/>
            <person name="Tamse R."/>
            <person name="Vaysberg M."/>
            <person name="Wallender E.K."/>
            <person name="Wong C."/>
            <person name="Yamamura Y."/>
            <person name="Yuan S."/>
            <person name="Shinozaki K."/>
            <person name="Davis R.W."/>
            <person name="Theologis A."/>
            <person name="Ecker J.R."/>
        </authorList>
    </citation>
    <scope>NUCLEOTIDE SEQUENCE [LARGE SCALE MRNA]</scope>
    <source>
        <strain>cv. Columbia</strain>
    </source>
</reference>
<reference key="4">
    <citation type="journal article" date="2016" name="Nat. Commun.">
        <title>Golgi-localized STELLO proteins regulate the assembly and trafficking of cellulose synthase complexes in Arabidopsis.</title>
        <authorList>
            <person name="Zhang Y."/>
            <person name="Nikolovski N."/>
            <person name="Sorieul M."/>
            <person name="Vellosillo T."/>
            <person name="McFarlane H.E."/>
            <person name="Dupree R."/>
            <person name="Kesten C."/>
            <person name="Schneider R."/>
            <person name="Driemeier C."/>
            <person name="Lathe R."/>
            <person name="Lampugnani E."/>
            <person name="Yu X."/>
            <person name="Ivakov A."/>
            <person name="Doblin M.S."/>
            <person name="Mortimer J.C."/>
            <person name="Brown S.P."/>
            <person name="Persson S."/>
            <person name="Dupree P."/>
        </authorList>
    </citation>
    <scope>FUNCTION</scope>
    <scope>DISRUPTION PHENOTYPE</scope>
    <scope>TISSUE SPECIFICITY</scope>
    <scope>SUBCELLULAR LOCATION</scope>
    <scope>MUTAGENESIS OF 205-ASP--ASP-206; ARG-260; 296-ASP--ASP-298 AND 591-ASP--ASP-592</scope>
    <scope>INTERACTION WITH STL2; CESA1; CESA3; CESA4; CESA6; CESA7 AND CESA8</scope>
    <scope>LACK OF INTERACTION WITH GOT1</scope>
    <scope>SUBUNIT</scope>
</reference>
<feature type="chain" id="PRO_0000437204" description="Probable glycosyltransferase STELLO1">
    <location>
        <begin position="1"/>
        <end position="771"/>
    </location>
</feature>
<feature type="topological domain" description="Cytoplasmic" evidence="4">
    <location>
        <begin position="1"/>
        <end position="50"/>
    </location>
</feature>
<feature type="transmembrane region" description="Helical" evidence="1">
    <location>
        <begin position="51"/>
        <end position="71"/>
    </location>
</feature>
<feature type="topological domain" description="Lumenal" evidence="4">
    <location>
        <begin position="72"/>
        <end position="771"/>
    </location>
</feature>
<feature type="region of interest" description="Disordered" evidence="3">
    <location>
        <begin position="1"/>
        <end position="23"/>
    </location>
</feature>
<feature type="glycosylation site" description="N-linked (GlcNAc...) asparagine" evidence="2">
    <location>
        <position position="242"/>
    </location>
</feature>
<feature type="glycosylation site" description="N-linked (GlcNAc...) asparagine" evidence="2">
    <location>
        <position position="729"/>
    </location>
</feature>
<feature type="mutagenesis site" description="Loss of activity." evidence="4">
    <original>DD</original>
    <variation>AA</variation>
    <location>
        <begin position="205"/>
        <end position="206"/>
    </location>
</feature>
<feature type="mutagenesis site" description="No effect." evidence="4">
    <original>R</original>
    <variation>A</variation>
    <location>
        <position position="260"/>
    </location>
</feature>
<feature type="mutagenesis site" description="Loss of activity." evidence="4">
    <original>DVD</original>
    <variation>AVA</variation>
    <location>
        <begin position="296"/>
        <end position="298"/>
    </location>
</feature>
<feature type="mutagenesis site" description="No effect." evidence="4">
    <original>DD</original>
    <variation>AA</variation>
    <location>
        <begin position="591"/>
        <end position="592"/>
    </location>
</feature>
<sequence length="771" mass="88063">MLVQDRAAPSPAKPPKSQIRELPTHQQIRRRFSEPKNLDFSTWFSENLSRIAVFSLLIVTIVAFFFLYNTTDTASLLCFQSQSTQFLQSLSRPQIKWNSIPVVPDKTSPYANFQTEKWIVVSVTKYPTEELKSLVKIRGWQVLAIGNSATPKDWSLKGSIFLSLDAQAELGYRVLDHLPYDSFVRKSVGYLFAIQHGAKKIYDADDRGEVIDGDLGKHFDVELVGLDSKQEPILQYSHENPNRTVVNPYIHFGQRSVWPRGLPLENVGEINHEEYYTEVFGGKQFIQQGISNGLPDVDSVFYFTRKTTLEAFDIRFDEHSPKVALPQGVMVPVNSFNTLYHSSAFWGLMLPVSVSSMASDVLRGYWGQRLLWELGGYVAVYPPTAHRFDRIEAYPFVEEKDLHVNVGRLIKFLLAWRSEKHSFFETVLDLSFAMAEEGFWTEQDLKFTAAWLQDLIAVGYQQPRLMSLELDRPRASIGHGDRKEFVPRKLPSVHLGVEETGTVSTEIGNLIRWRKNFGNVVLVMFCNGPVERTALEWRLLYGRIFKTVVILSSQKNSDLYVEEAKLDHIYKHLPKIFDRYSSAEGFLFVEDDTVLNYWNLLQADKSKIWTTDKVSKSWTSVKPTGNSDWFSVQAELVKKTVSTMPAHFQVNYKDATKNNHETLTVCSSEVFYVPKRLVTDFIDLVDLVGDMDLHYKVAVPMFFLSMDSPQNFDPVLGSMVYKRKSASFNTSSSLYSAKAPAVHPWSISSEQDFIKLVQQMAEGDPLLMELV</sequence>
<dbReference type="EC" id="2.4.-.-" evidence="6"/>
<dbReference type="EMBL" id="AC002339">
    <property type="protein sequence ID" value="AAC02770.1"/>
    <property type="molecule type" value="Genomic_DNA"/>
</dbReference>
<dbReference type="EMBL" id="CP002685">
    <property type="protein sequence ID" value="AEC10030.1"/>
    <property type="molecule type" value="Genomic_DNA"/>
</dbReference>
<dbReference type="EMBL" id="AY056269">
    <property type="protein sequence ID" value="AAL07118.1"/>
    <property type="molecule type" value="mRNA"/>
</dbReference>
<dbReference type="PIR" id="H84845">
    <property type="entry name" value="H84845"/>
</dbReference>
<dbReference type="RefSeq" id="NP_565960.1">
    <property type="nucleotide sequence ID" value="NM_129741.1"/>
</dbReference>
<dbReference type="SMR" id="O22943"/>
<dbReference type="FunCoup" id="O22943">
    <property type="interactions" value="669"/>
</dbReference>
<dbReference type="STRING" id="3702.O22943"/>
<dbReference type="GlyCosmos" id="O22943">
    <property type="glycosylation" value="2 sites, No reported glycans"/>
</dbReference>
<dbReference type="GlyGen" id="O22943">
    <property type="glycosylation" value="2 sites"/>
</dbReference>
<dbReference type="PaxDb" id="3702-AT2G41770.1"/>
<dbReference type="ProteomicsDB" id="228422"/>
<dbReference type="EnsemblPlants" id="AT2G41770.1">
    <property type="protein sequence ID" value="AT2G41770.1"/>
    <property type="gene ID" value="AT2G41770"/>
</dbReference>
<dbReference type="GeneID" id="818776"/>
<dbReference type="Gramene" id="AT2G41770.1">
    <property type="protein sequence ID" value="AT2G41770.1"/>
    <property type="gene ID" value="AT2G41770"/>
</dbReference>
<dbReference type="KEGG" id="ath:AT2G41770"/>
<dbReference type="Araport" id="AT2G41770"/>
<dbReference type="TAIR" id="AT2G41770">
    <property type="gene designation" value="STL1"/>
</dbReference>
<dbReference type="eggNOG" id="ENOG502QTAG">
    <property type="taxonomic scope" value="Eukaryota"/>
</dbReference>
<dbReference type="HOGENOM" id="CLU_011678_0_0_1"/>
<dbReference type="InParanoid" id="O22943"/>
<dbReference type="OMA" id="FLTEKWI"/>
<dbReference type="PhylomeDB" id="O22943"/>
<dbReference type="PRO" id="PR:O22943"/>
<dbReference type="Proteomes" id="UP000006548">
    <property type="component" value="Chromosome 2"/>
</dbReference>
<dbReference type="ExpressionAtlas" id="O22943">
    <property type="expression patterns" value="baseline and differential"/>
</dbReference>
<dbReference type="GO" id="GO:0005768">
    <property type="term" value="C:endosome"/>
    <property type="evidence" value="ECO:0007005"/>
    <property type="project" value="TAIR"/>
</dbReference>
<dbReference type="GO" id="GO:0005794">
    <property type="term" value="C:Golgi apparatus"/>
    <property type="evidence" value="ECO:0000314"/>
    <property type="project" value="UniProtKB"/>
</dbReference>
<dbReference type="GO" id="GO:0000139">
    <property type="term" value="C:Golgi membrane"/>
    <property type="evidence" value="ECO:0007669"/>
    <property type="project" value="UniProtKB-SubCell"/>
</dbReference>
<dbReference type="GO" id="GO:0005802">
    <property type="term" value="C:trans-Golgi network"/>
    <property type="evidence" value="ECO:0007005"/>
    <property type="project" value="TAIR"/>
</dbReference>
<dbReference type="GO" id="GO:0016757">
    <property type="term" value="F:glycosyltransferase activity"/>
    <property type="evidence" value="ECO:0007669"/>
    <property type="project" value="UniProtKB-KW"/>
</dbReference>
<dbReference type="GO" id="GO:0042802">
    <property type="term" value="F:identical protein binding"/>
    <property type="evidence" value="ECO:0000353"/>
    <property type="project" value="UniProtKB"/>
</dbReference>
<dbReference type="GO" id="GO:0052324">
    <property type="term" value="P:plant-type cell wall cellulose biosynthetic process"/>
    <property type="evidence" value="ECO:0000315"/>
    <property type="project" value="TAIR"/>
</dbReference>
<dbReference type="GO" id="GO:2001009">
    <property type="term" value="P:regulation of plant-type cell wall cellulose biosynthetic process"/>
    <property type="evidence" value="ECO:0000315"/>
    <property type="project" value="UniProtKB"/>
</dbReference>
<dbReference type="InterPro" id="IPR005049">
    <property type="entry name" value="STL-like"/>
</dbReference>
<dbReference type="PANTHER" id="PTHR31362:SF0">
    <property type="entry name" value="EXOSTOSIN DOMAIN-CONTAINING PROTEIN-RELATED"/>
    <property type="match status" value="1"/>
</dbReference>
<dbReference type="PANTHER" id="PTHR31362">
    <property type="entry name" value="GLYCOSYLTRANSFERASE STELLO1-RELATED"/>
    <property type="match status" value="1"/>
</dbReference>
<dbReference type="Pfam" id="PF03385">
    <property type="entry name" value="STELLO"/>
    <property type="match status" value="1"/>
</dbReference>
<accession>O22943</accession>